<gene>
    <name evidence="7" type="primary">gvpM2</name>
    <name evidence="6" type="synonym">c-gvpM</name>
    <name evidence="7" type="ordered locus">VNG_6228G</name>
</gene>
<keyword id="KW-0304">Gas vesicle</keyword>
<keyword id="KW-0614">Plasmid</keyword>
<keyword id="KW-1185">Reference proteome</keyword>
<organism>
    <name type="scientific">Halobacterium salinarum (strain ATCC 700922 / JCM 11081 / NRC-1)</name>
    <name type="common">Halobacterium halobium</name>
    <dbReference type="NCBI Taxonomy" id="64091"/>
    <lineage>
        <taxon>Archaea</taxon>
        <taxon>Methanobacteriati</taxon>
        <taxon>Methanobacteriota</taxon>
        <taxon>Stenosarchaea group</taxon>
        <taxon>Halobacteria</taxon>
        <taxon>Halobacteriales</taxon>
        <taxon>Halobacteriaceae</taxon>
        <taxon>Halobacterium</taxon>
        <taxon>Halobacterium salinarum NRC-34001</taxon>
    </lineage>
</organism>
<protein>
    <recommendedName>
        <fullName>Gas vesicle protein M2</fullName>
        <shortName>GvpM2</shortName>
    </recommendedName>
</protein>
<accession>P33957</accession>
<geneLocation type="plasmid">
    <name>pNRC200</name>
</geneLocation>
<feature type="chain" id="PRO_0000200007" description="Gas vesicle protein M2">
    <location>
        <begin position="1"/>
        <end position="73"/>
    </location>
</feature>
<comment type="function">
    <text evidence="1 3">Proteins GvpF to GvpM might be involved in nucleating gas vesicle formation. A minor component of the gas vesicle (By similarity). Gas vesicles are hollow, gas filled proteinaceous nanostructures found in several microbial planktonic microorganisms. They allow positioning of halobacteria at the optimal depth for growth in the poorly aerated, shallow brine pools of their habitat (PubMed:33711860).</text>
</comment>
<comment type="function">
    <text evidence="5">Expression of 2 c-vac DNA fragments containing 2 divergently transcribed regions (gvpE-gvpF-gvpG-gvpH-gvpI-gvpJ-gvpK-gvpL-gvpM and gvpA-gvpC-gvpN-gvpO) allows H.volcanii to produce gas vesicles.</text>
</comment>
<comment type="subunit">
    <text evidence="1">GvpF to GvpM interact with each other in vitro, and may form multi-subunit complex(es). Might interact with GvpA.</text>
</comment>
<comment type="subcellular location">
    <subcellularLocation>
        <location evidence="1">Gas vesicle</location>
    </subcellularLocation>
</comment>
<comment type="induction">
    <text evidence="3 4">In PHH4 (a deletion of the p-vac locus) transcribed in all growth phases, maximal expression in mid-stationary phase. An unstable 6kb transcript able to cover gvpD-gvpE-gvpF-gvpG-gvpH-gvpI-gvpJ-gvpK-gvpL-gvpM is detected, as well as smaller transcripts (PubMed:8763925). Gas vesicles appear earlier when grown in static culture, possibly due to O(2)-limitation (PubMed:33711860).</text>
</comment>
<comment type="miscellaneous">
    <text evidence="2 4">Encoded in a 14-gene locus called c-vac which produces cylindrical gas vesicles only in the stationary growth phase.</text>
</comment>
<comment type="similarity">
    <text evidence="7">Belongs to the gas vesicle GvpA family.</text>
</comment>
<evidence type="ECO:0000250" key="1">
    <source>
        <dbReference type="UniProtKB" id="P24377"/>
    </source>
</evidence>
<evidence type="ECO:0000269" key="2">
    <source>
    </source>
</evidence>
<evidence type="ECO:0000269" key="3">
    <source>
    </source>
</evidence>
<evidence type="ECO:0000269" key="4">
    <source>
    </source>
</evidence>
<evidence type="ECO:0000269" key="5">
    <source>
    </source>
</evidence>
<evidence type="ECO:0000303" key="6">
    <source>
    </source>
</evidence>
<evidence type="ECO:0000305" key="7"/>
<evidence type="ECO:0000312" key="8">
    <source>
        <dbReference type="EMBL" id="AE004438"/>
    </source>
</evidence>
<evidence type="ECO:0000312" key="9">
    <source>
        <dbReference type="EMBL" id="CAA64352.1"/>
    </source>
</evidence>
<dbReference type="EMBL" id="X64730">
    <property type="protein sequence ID" value="CAA45984.1"/>
    <property type="molecule type" value="Genomic_DNA"/>
</dbReference>
<dbReference type="EMBL" id="X94688">
    <property type="protein sequence ID" value="CAA64352.1"/>
    <property type="molecule type" value="Genomic_DNA"/>
</dbReference>
<dbReference type="EMBL" id="AE004438">
    <property type="status" value="NOT_ANNOTATED_CDS"/>
    <property type="molecule type" value="Genomic_DNA"/>
</dbReference>
<dbReference type="OrthoDB" id="131850at2157"/>
<dbReference type="Proteomes" id="UP000000554">
    <property type="component" value="Plasmid pNRC200"/>
</dbReference>
<dbReference type="GO" id="GO:0031411">
    <property type="term" value="C:gas vesicle"/>
    <property type="evidence" value="ECO:0007669"/>
    <property type="project" value="UniProtKB-SubCell"/>
</dbReference>
<dbReference type="GO" id="GO:0012506">
    <property type="term" value="C:vesicle membrane"/>
    <property type="evidence" value="ECO:0007669"/>
    <property type="project" value="InterPro"/>
</dbReference>
<dbReference type="GO" id="GO:0005198">
    <property type="term" value="F:structural molecule activity"/>
    <property type="evidence" value="ECO:0007669"/>
    <property type="project" value="InterPro"/>
</dbReference>
<dbReference type="InterPro" id="IPR000638">
    <property type="entry name" value="Gas-vesicle_GvpA-like"/>
</dbReference>
<dbReference type="InterPro" id="IPR050530">
    <property type="entry name" value="GvpA"/>
</dbReference>
<dbReference type="InterPro" id="IPR018493">
    <property type="entry name" value="GvpA-like_CS"/>
</dbReference>
<dbReference type="NCBIfam" id="NF046091">
    <property type="entry name" value="halo_gas_GvpM"/>
    <property type="match status" value="1"/>
</dbReference>
<dbReference type="PANTHER" id="PTHR35344:SF4">
    <property type="entry name" value="GAS VESICLE PROTEIN A1"/>
    <property type="match status" value="1"/>
</dbReference>
<dbReference type="PANTHER" id="PTHR35344">
    <property type="entry name" value="GAS VESICLE STRUCTURAL PROTEIN 2-RELATED"/>
    <property type="match status" value="1"/>
</dbReference>
<dbReference type="Pfam" id="PF00741">
    <property type="entry name" value="Gas_vesicle"/>
    <property type="match status" value="1"/>
</dbReference>
<dbReference type="PROSITE" id="PS00234">
    <property type="entry name" value="GAS_VESICLE_A_1"/>
    <property type="match status" value="1"/>
</dbReference>
<dbReference type="PROSITE" id="PS00669">
    <property type="entry name" value="GAS_VESICLE_A_2"/>
    <property type="match status" value="1"/>
</dbReference>
<reference key="1">
    <citation type="journal article" date="1992" name="J. Mol. Biol.">
        <title>Three different but related gene clusters encoding gas vesicles in halophilic archaea.</title>
        <authorList>
            <person name="Englert C."/>
            <person name="Krueger K."/>
            <person name="Offner S."/>
            <person name="Pfeifer F."/>
        </authorList>
    </citation>
    <scope>NUCLEOTIDE SEQUENCE [GENOMIC DNA]</scope>
    <scope>GAS VESICLE GENE CLUSTER</scope>
    <source>
        <strain>NRC 817</strain>
    </source>
</reference>
<reference evidence="9" key="2">
    <citation type="journal article" date="1996" name="J. Bacteriol.">
        <title>Transcript analysis of the c-vac region and differential synthesis of the two regulatory gas vesicle proteins GvpD and GvpE in Halobacterium salinarium PHH4.</title>
        <authorList>
            <person name="Krueger K."/>
            <person name="Pfeifer F."/>
        </authorList>
    </citation>
    <scope>NUCLEOTIDE SEQUENCE [GENOMIC DNA]</scope>
    <scope>INDUCTION</scope>
    <source>
        <strain>PHH1 /PHH4</strain>
    </source>
</reference>
<reference evidence="8" key="3">
    <citation type="journal article" date="2000" name="Proc. Natl. Acad. Sci. U.S.A.">
        <title>Genome sequence of Halobacterium species NRC-1.</title>
        <authorList>
            <person name="Ng W.V."/>
            <person name="Kennedy S.P."/>
            <person name="Mahairas G.G."/>
            <person name="Berquist B."/>
            <person name="Pan M."/>
            <person name="Shukla H.D."/>
            <person name="Lasky S.R."/>
            <person name="Baliga N.S."/>
            <person name="Thorsson V."/>
            <person name="Sbrogna J."/>
            <person name="Swartzell S."/>
            <person name="Weir D."/>
            <person name="Hall J."/>
            <person name="Dahl T.A."/>
            <person name="Welti R."/>
            <person name="Goo Y.A."/>
            <person name="Leithauser B."/>
            <person name="Keller K."/>
            <person name="Cruz R."/>
            <person name="Danson M.J."/>
            <person name="Hough D.W."/>
            <person name="Maddocks D.G."/>
            <person name="Jablonski P.E."/>
            <person name="Krebs M.P."/>
            <person name="Angevine C.M."/>
            <person name="Dale H."/>
            <person name="Isenbarger T.A."/>
            <person name="Peck R.F."/>
            <person name="Pohlschroder M."/>
            <person name="Spudich J.L."/>
            <person name="Jung K.-H."/>
            <person name="Alam M."/>
            <person name="Freitas T."/>
            <person name="Hou S."/>
            <person name="Daniels C.J."/>
            <person name="Dennis P.P."/>
            <person name="Omer A.D."/>
            <person name="Ebhardt H."/>
            <person name="Lowe T.M."/>
            <person name="Liang P."/>
            <person name="Riley M."/>
            <person name="Hood L."/>
            <person name="DasSarma S."/>
        </authorList>
    </citation>
    <scope>NUCLEOTIDE SEQUENCE [LARGE SCALE GENOMIC DNA]</scope>
    <source>
        <strain>ATCC 700922 / JCM 11081 / NRC-1</strain>
        <plasmid>pNRC200</plasmid>
    </source>
</reference>
<reference key="4">
    <citation type="journal article" date="1997" name="Microbiology">
        <title>Growth competition between Halobacterium salinarium strain PHH1 and mutants affected in gas vesicle synthesis.</title>
        <authorList>
            <person name="Beard S.J."/>
            <person name="Hayes P.K."/>
            <person name="Walsby A.E."/>
        </authorList>
    </citation>
    <scope>FUNCTION IN BUOYANCY</scope>
    <scope>POSSIBLE INDUCTION BY OXYGEN LIMITATION</scope>
    <source>
        <strain>PHH1</strain>
    </source>
</reference>
<reference key="5">
    <citation type="journal article" date="1998" name="Microbiology">
        <title>Structural characteristics of halobacterial gas vesicles.</title>
        <authorList>
            <person name="Offner S."/>
            <person name="Ziese U."/>
            <person name="Wanner G."/>
            <person name="Typke D."/>
            <person name="Pfeifer F."/>
        </authorList>
    </citation>
    <scope>FUNCTION</scope>
    <source>
        <strain>PHH1</strain>
    </source>
</reference>
<sequence>MNPTKRNSHAIVEFVDVLLRDGAVIQADAIVTVAGVPLLGISLRAAIAGMTTMTEYGIFDGWDADHRRRNAQP</sequence>
<proteinExistence type="evidence at protein level"/>
<name>GVPM2_HALSA</name>